<dbReference type="EMBL" id="Z97369">
    <property type="protein sequence ID" value="CAB10626.1"/>
    <property type="molecule type" value="Genomic_DNA"/>
</dbReference>
<dbReference type="EMBL" id="AL583922">
    <property type="protein sequence ID" value="CAC30569.1"/>
    <property type="molecule type" value="Genomic_DNA"/>
</dbReference>
<dbReference type="PIR" id="D87111">
    <property type="entry name" value="D87111"/>
</dbReference>
<dbReference type="RefSeq" id="NP_302116.1">
    <property type="nucleotide sequence ID" value="NC_002677.1"/>
</dbReference>
<dbReference type="RefSeq" id="WP_010908437.1">
    <property type="nucleotide sequence ID" value="NC_002677.1"/>
</dbReference>
<dbReference type="SMR" id="O33014"/>
<dbReference type="STRING" id="272631.gene:17575459"/>
<dbReference type="KEGG" id="mle:ML1618"/>
<dbReference type="PATRIC" id="fig|272631.5.peg.3044"/>
<dbReference type="Leproma" id="ML1618"/>
<dbReference type="eggNOG" id="COG0228">
    <property type="taxonomic scope" value="Bacteria"/>
</dbReference>
<dbReference type="HOGENOM" id="CLU_100590_1_1_11"/>
<dbReference type="OrthoDB" id="9807878at2"/>
<dbReference type="Proteomes" id="UP000000806">
    <property type="component" value="Chromosome"/>
</dbReference>
<dbReference type="GO" id="GO:0005737">
    <property type="term" value="C:cytoplasm"/>
    <property type="evidence" value="ECO:0007669"/>
    <property type="project" value="UniProtKB-ARBA"/>
</dbReference>
<dbReference type="GO" id="GO:0015935">
    <property type="term" value="C:small ribosomal subunit"/>
    <property type="evidence" value="ECO:0007669"/>
    <property type="project" value="TreeGrafter"/>
</dbReference>
<dbReference type="GO" id="GO:0003735">
    <property type="term" value="F:structural constituent of ribosome"/>
    <property type="evidence" value="ECO:0007669"/>
    <property type="project" value="InterPro"/>
</dbReference>
<dbReference type="GO" id="GO:0006412">
    <property type="term" value="P:translation"/>
    <property type="evidence" value="ECO:0007669"/>
    <property type="project" value="UniProtKB-UniRule"/>
</dbReference>
<dbReference type="Gene3D" id="3.30.1320.10">
    <property type="match status" value="1"/>
</dbReference>
<dbReference type="HAMAP" id="MF_00385">
    <property type="entry name" value="Ribosomal_bS16"/>
    <property type="match status" value="1"/>
</dbReference>
<dbReference type="InterPro" id="IPR000307">
    <property type="entry name" value="Ribosomal_bS16"/>
</dbReference>
<dbReference type="InterPro" id="IPR020592">
    <property type="entry name" value="Ribosomal_bS16_CS"/>
</dbReference>
<dbReference type="InterPro" id="IPR023803">
    <property type="entry name" value="Ribosomal_bS16_dom_sf"/>
</dbReference>
<dbReference type="NCBIfam" id="NF011093">
    <property type="entry name" value="PRK14520.1"/>
    <property type="match status" value="1"/>
</dbReference>
<dbReference type="NCBIfam" id="TIGR00002">
    <property type="entry name" value="S16"/>
    <property type="match status" value="1"/>
</dbReference>
<dbReference type="PANTHER" id="PTHR12919">
    <property type="entry name" value="30S RIBOSOMAL PROTEIN S16"/>
    <property type="match status" value="1"/>
</dbReference>
<dbReference type="PANTHER" id="PTHR12919:SF20">
    <property type="entry name" value="SMALL RIBOSOMAL SUBUNIT PROTEIN BS16M"/>
    <property type="match status" value="1"/>
</dbReference>
<dbReference type="Pfam" id="PF00886">
    <property type="entry name" value="Ribosomal_S16"/>
    <property type="match status" value="1"/>
</dbReference>
<dbReference type="SUPFAM" id="SSF54565">
    <property type="entry name" value="Ribosomal protein S16"/>
    <property type="match status" value="1"/>
</dbReference>
<dbReference type="PROSITE" id="PS00732">
    <property type="entry name" value="RIBOSOMAL_S16"/>
    <property type="match status" value="1"/>
</dbReference>
<accession>O33014</accession>
<sequence length="160" mass="17446">MAVKIKLTRLGKIRNPQYRVIVADARTRRDGRSIEVIGRYHPKEEPSLIDINSERTQYWLSVGAKPTEPVLKLLKITGDWQKFKGLPGAEGRLKVAPPKPSKLELFNAALAVADGGPTTEATRPKKKVSAKKAAKAVESDAEGAKATKAYALAEGDEQSE</sequence>
<feature type="chain" id="PRO_0000167207" description="Small ribosomal subunit protein bS16">
    <location>
        <begin position="1"/>
        <end position="160"/>
    </location>
</feature>
<feature type="region of interest" description="Disordered" evidence="2">
    <location>
        <begin position="115"/>
        <end position="139"/>
    </location>
</feature>
<feature type="compositionally biased region" description="Basic residues" evidence="2">
    <location>
        <begin position="124"/>
        <end position="134"/>
    </location>
</feature>
<protein>
    <recommendedName>
        <fullName evidence="1">Small ribosomal subunit protein bS16</fullName>
    </recommendedName>
    <alternativeName>
        <fullName evidence="3">30S ribosomal protein S16</fullName>
    </alternativeName>
</protein>
<proteinExistence type="inferred from homology"/>
<keyword id="KW-1185">Reference proteome</keyword>
<keyword id="KW-0687">Ribonucleoprotein</keyword>
<keyword id="KW-0689">Ribosomal protein</keyword>
<comment type="similarity">
    <text evidence="1">Belongs to the bacterial ribosomal protein bS16 family.</text>
</comment>
<organism>
    <name type="scientific">Mycobacterium leprae (strain TN)</name>
    <dbReference type="NCBI Taxonomy" id="272631"/>
    <lineage>
        <taxon>Bacteria</taxon>
        <taxon>Bacillati</taxon>
        <taxon>Actinomycetota</taxon>
        <taxon>Actinomycetes</taxon>
        <taxon>Mycobacteriales</taxon>
        <taxon>Mycobacteriaceae</taxon>
        <taxon>Mycobacterium</taxon>
    </lineage>
</organism>
<reference key="1">
    <citation type="journal article" date="2001" name="Nature">
        <title>Massive gene decay in the leprosy bacillus.</title>
        <authorList>
            <person name="Cole S.T."/>
            <person name="Eiglmeier K."/>
            <person name="Parkhill J."/>
            <person name="James K.D."/>
            <person name="Thomson N.R."/>
            <person name="Wheeler P.R."/>
            <person name="Honore N."/>
            <person name="Garnier T."/>
            <person name="Churcher C.M."/>
            <person name="Harris D.E."/>
            <person name="Mungall K.L."/>
            <person name="Basham D."/>
            <person name="Brown D."/>
            <person name="Chillingworth T."/>
            <person name="Connor R."/>
            <person name="Davies R.M."/>
            <person name="Devlin K."/>
            <person name="Duthoy S."/>
            <person name="Feltwell T."/>
            <person name="Fraser A."/>
            <person name="Hamlin N."/>
            <person name="Holroyd S."/>
            <person name="Hornsby T."/>
            <person name="Jagels K."/>
            <person name="Lacroix C."/>
            <person name="Maclean J."/>
            <person name="Moule S."/>
            <person name="Murphy L.D."/>
            <person name="Oliver K."/>
            <person name="Quail M.A."/>
            <person name="Rajandream M.A."/>
            <person name="Rutherford K.M."/>
            <person name="Rutter S."/>
            <person name="Seeger K."/>
            <person name="Simon S."/>
            <person name="Simmonds M."/>
            <person name="Skelton J."/>
            <person name="Squares R."/>
            <person name="Squares S."/>
            <person name="Stevens K."/>
            <person name="Taylor K."/>
            <person name="Whitehead S."/>
            <person name="Woodward J.R."/>
            <person name="Barrell B.G."/>
        </authorList>
    </citation>
    <scope>NUCLEOTIDE SEQUENCE [LARGE SCALE GENOMIC DNA]</scope>
    <source>
        <strain>TN</strain>
    </source>
</reference>
<gene>
    <name evidence="1" type="primary">rpsP</name>
    <name type="ordered locus">ML1618</name>
    <name type="ORF">MLCB250.32</name>
</gene>
<evidence type="ECO:0000255" key="1">
    <source>
        <dbReference type="HAMAP-Rule" id="MF_00385"/>
    </source>
</evidence>
<evidence type="ECO:0000256" key="2">
    <source>
        <dbReference type="SAM" id="MobiDB-lite"/>
    </source>
</evidence>
<evidence type="ECO:0000305" key="3"/>
<name>RS16_MYCLE</name>